<proteinExistence type="inferred from homology"/>
<organism>
    <name type="scientific">Yersinia enterocolitica serotype O:8 / biotype 1B (strain NCTC 13174 / 8081)</name>
    <dbReference type="NCBI Taxonomy" id="393305"/>
    <lineage>
        <taxon>Bacteria</taxon>
        <taxon>Pseudomonadati</taxon>
        <taxon>Pseudomonadota</taxon>
        <taxon>Gammaproteobacteria</taxon>
        <taxon>Enterobacterales</taxon>
        <taxon>Yersiniaceae</taxon>
        <taxon>Yersinia</taxon>
    </lineage>
</organism>
<reference key="1">
    <citation type="journal article" date="2006" name="PLoS Genet.">
        <title>The complete genome sequence and comparative genome analysis of the high pathogenicity Yersinia enterocolitica strain 8081.</title>
        <authorList>
            <person name="Thomson N.R."/>
            <person name="Howard S."/>
            <person name="Wren B.W."/>
            <person name="Holden M.T.G."/>
            <person name="Crossman L."/>
            <person name="Challis G.L."/>
            <person name="Churcher C."/>
            <person name="Mungall K."/>
            <person name="Brooks K."/>
            <person name="Chillingworth T."/>
            <person name="Feltwell T."/>
            <person name="Abdellah Z."/>
            <person name="Hauser H."/>
            <person name="Jagels K."/>
            <person name="Maddison M."/>
            <person name="Moule S."/>
            <person name="Sanders M."/>
            <person name="Whitehead S."/>
            <person name="Quail M.A."/>
            <person name="Dougan G."/>
            <person name="Parkhill J."/>
            <person name="Prentice M.B."/>
        </authorList>
    </citation>
    <scope>NUCLEOTIDE SEQUENCE [LARGE SCALE GENOMIC DNA]</scope>
    <source>
        <strain>NCTC 13174 / 8081</strain>
    </source>
</reference>
<evidence type="ECO:0000255" key="1">
    <source>
        <dbReference type="HAMAP-Rule" id="MF_00385"/>
    </source>
</evidence>
<evidence type="ECO:0000305" key="2"/>
<gene>
    <name evidence="1" type="primary">rpsP</name>
    <name type="ordered locus">YE0843</name>
</gene>
<accession>A1JK22</accession>
<name>RS16_YERE8</name>
<sequence>MVTIRLARGGAKKRPFYQVVVTDSRNARDGRFIERVGFFNPIASGQAEALRLDLDRINHWVELGATVSDRVSALIKEAKKAA</sequence>
<feature type="chain" id="PRO_1000049377" description="Small ribosomal subunit protein bS16">
    <location>
        <begin position="1"/>
        <end position="82"/>
    </location>
</feature>
<keyword id="KW-0687">Ribonucleoprotein</keyword>
<keyword id="KW-0689">Ribosomal protein</keyword>
<protein>
    <recommendedName>
        <fullName evidence="1">Small ribosomal subunit protein bS16</fullName>
    </recommendedName>
    <alternativeName>
        <fullName evidence="2">30S ribosomal protein S16</fullName>
    </alternativeName>
</protein>
<comment type="similarity">
    <text evidence="1">Belongs to the bacterial ribosomal protein bS16 family.</text>
</comment>
<dbReference type="EMBL" id="AM286415">
    <property type="protein sequence ID" value="CAL10943.1"/>
    <property type="molecule type" value="Genomic_DNA"/>
</dbReference>
<dbReference type="RefSeq" id="WP_005166006.1">
    <property type="nucleotide sequence ID" value="NC_008800.1"/>
</dbReference>
<dbReference type="RefSeq" id="YP_001005181.1">
    <property type="nucleotide sequence ID" value="NC_008800.1"/>
</dbReference>
<dbReference type="SMR" id="A1JK22"/>
<dbReference type="GeneID" id="31410224"/>
<dbReference type="KEGG" id="yen:YE0843"/>
<dbReference type="PATRIC" id="fig|393305.7.peg.937"/>
<dbReference type="eggNOG" id="COG0228">
    <property type="taxonomic scope" value="Bacteria"/>
</dbReference>
<dbReference type="HOGENOM" id="CLU_100590_5_1_6"/>
<dbReference type="OrthoDB" id="9807878at2"/>
<dbReference type="Proteomes" id="UP000000642">
    <property type="component" value="Chromosome"/>
</dbReference>
<dbReference type="GO" id="GO:0005737">
    <property type="term" value="C:cytoplasm"/>
    <property type="evidence" value="ECO:0007669"/>
    <property type="project" value="UniProtKB-ARBA"/>
</dbReference>
<dbReference type="GO" id="GO:0015935">
    <property type="term" value="C:small ribosomal subunit"/>
    <property type="evidence" value="ECO:0007669"/>
    <property type="project" value="TreeGrafter"/>
</dbReference>
<dbReference type="GO" id="GO:0003735">
    <property type="term" value="F:structural constituent of ribosome"/>
    <property type="evidence" value="ECO:0007669"/>
    <property type="project" value="InterPro"/>
</dbReference>
<dbReference type="GO" id="GO:0006412">
    <property type="term" value="P:translation"/>
    <property type="evidence" value="ECO:0007669"/>
    <property type="project" value="UniProtKB-UniRule"/>
</dbReference>
<dbReference type="FunFam" id="3.30.1320.10:FF:000001">
    <property type="entry name" value="30S ribosomal protein S16"/>
    <property type="match status" value="1"/>
</dbReference>
<dbReference type="Gene3D" id="3.30.1320.10">
    <property type="match status" value="1"/>
</dbReference>
<dbReference type="HAMAP" id="MF_00385">
    <property type="entry name" value="Ribosomal_bS16"/>
    <property type="match status" value="1"/>
</dbReference>
<dbReference type="InterPro" id="IPR000307">
    <property type="entry name" value="Ribosomal_bS16"/>
</dbReference>
<dbReference type="InterPro" id="IPR020592">
    <property type="entry name" value="Ribosomal_bS16_CS"/>
</dbReference>
<dbReference type="InterPro" id="IPR023803">
    <property type="entry name" value="Ribosomal_bS16_dom_sf"/>
</dbReference>
<dbReference type="NCBIfam" id="TIGR00002">
    <property type="entry name" value="S16"/>
    <property type="match status" value="1"/>
</dbReference>
<dbReference type="PANTHER" id="PTHR12919">
    <property type="entry name" value="30S RIBOSOMAL PROTEIN S16"/>
    <property type="match status" value="1"/>
</dbReference>
<dbReference type="PANTHER" id="PTHR12919:SF20">
    <property type="entry name" value="SMALL RIBOSOMAL SUBUNIT PROTEIN BS16M"/>
    <property type="match status" value="1"/>
</dbReference>
<dbReference type="Pfam" id="PF00886">
    <property type="entry name" value="Ribosomal_S16"/>
    <property type="match status" value="1"/>
</dbReference>
<dbReference type="SUPFAM" id="SSF54565">
    <property type="entry name" value="Ribosomal protein S16"/>
    <property type="match status" value="1"/>
</dbReference>
<dbReference type="PROSITE" id="PS00732">
    <property type="entry name" value="RIBOSOMAL_S16"/>
    <property type="match status" value="1"/>
</dbReference>